<name>ZUR_MYCTO</name>
<protein>
    <recommendedName>
        <fullName>Zinc uptake regulation protein</fullName>
        <shortName>Zinc uptake regulator</shortName>
    </recommendedName>
</protein>
<reference key="1">
    <citation type="journal article" date="2002" name="J. Bacteriol.">
        <title>Whole-genome comparison of Mycobacterium tuberculosis clinical and laboratory strains.</title>
        <authorList>
            <person name="Fleischmann R.D."/>
            <person name="Alland D."/>
            <person name="Eisen J.A."/>
            <person name="Carpenter L."/>
            <person name="White O."/>
            <person name="Peterson J.D."/>
            <person name="DeBoy R.T."/>
            <person name="Dodson R.J."/>
            <person name="Gwinn M.L."/>
            <person name="Haft D.H."/>
            <person name="Hickey E.K."/>
            <person name="Kolonay J.F."/>
            <person name="Nelson W.C."/>
            <person name="Umayam L.A."/>
            <person name="Ermolaeva M.D."/>
            <person name="Salzberg S.L."/>
            <person name="Delcher A."/>
            <person name="Utterback T.R."/>
            <person name="Weidman J.F."/>
            <person name="Khouri H.M."/>
            <person name="Gill J."/>
            <person name="Mikula A."/>
            <person name="Bishai W."/>
            <person name="Jacobs W.R. Jr."/>
            <person name="Venter J.C."/>
            <person name="Fraser C.M."/>
        </authorList>
    </citation>
    <scope>NUCLEOTIDE SEQUENCE [LARGE SCALE GENOMIC DNA]</scope>
    <source>
        <strain>CDC 1551 / Oshkosh</strain>
    </source>
</reference>
<sequence>MSAAGVRSTRQRAAISTLLETLDDFRSAQELHDELRRRGENIGLTTVYRTLQSMASSGLVDTLHTDTGESVYRRCSEHHHHHLVCRSCGSTIEVGDHEVEAWAAEVATKHGFSDVSHTIEIFGTCSDCRS</sequence>
<comment type="function">
    <text evidence="1">Global transcriptional regulator involved in zinc homeostasis.</text>
</comment>
<comment type="cofactor">
    <cofactor evidence="1">
        <name>Zn(2+)</name>
        <dbReference type="ChEBI" id="CHEBI:29105"/>
    </cofactor>
    <text evidence="1">Binds 2 Zn(2+) ions per subunit.</text>
</comment>
<comment type="subunit">
    <text evidence="1">Homodimer.</text>
</comment>
<comment type="subcellular location">
    <subcellularLocation>
        <location evidence="1">Cytoplasm</location>
    </subcellularLocation>
</comment>
<comment type="domain">
    <text evidence="1">The N-terminal domain binds DNA and the C-terminal domain is involved in metal-binding and dimerization.</text>
</comment>
<comment type="similarity">
    <text evidence="2">Belongs to the Fur family.</text>
</comment>
<dbReference type="EMBL" id="AE000516">
    <property type="protein sequence ID" value="AAK46722.1"/>
    <property type="molecule type" value="Genomic_DNA"/>
</dbReference>
<dbReference type="PIR" id="F70585">
    <property type="entry name" value="F70585"/>
</dbReference>
<dbReference type="RefSeq" id="WP_003899290.1">
    <property type="nucleotide sequence ID" value="NZ_KK341227.1"/>
</dbReference>
<dbReference type="SMR" id="P9WN84"/>
<dbReference type="KEGG" id="mtc:MT2428"/>
<dbReference type="PATRIC" id="fig|83331.31.peg.2616"/>
<dbReference type="HOGENOM" id="CLU_096072_5_0_11"/>
<dbReference type="Proteomes" id="UP000001020">
    <property type="component" value="Chromosome"/>
</dbReference>
<dbReference type="GO" id="GO:0005829">
    <property type="term" value="C:cytosol"/>
    <property type="evidence" value="ECO:0007669"/>
    <property type="project" value="TreeGrafter"/>
</dbReference>
<dbReference type="GO" id="GO:0003700">
    <property type="term" value="F:DNA-binding transcription factor activity"/>
    <property type="evidence" value="ECO:0007669"/>
    <property type="project" value="InterPro"/>
</dbReference>
<dbReference type="GO" id="GO:0000976">
    <property type="term" value="F:transcription cis-regulatory region binding"/>
    <property type="evidence" value="ECO:0007669"/>
    <property type="project" value="TreeGrafter"/>
</dbReference>
<dbReference type="GO" id="GO:0008270">
    <property type="term" value="F:zinc ion binding"/>
    <property type="evidence" value="ECO:0007669"/>
    <property type="project" value="TreeGrafter"/>
</dbReference>
<dbReference type="GO" id="GO:0045892">
    <property type="term" value="P:negative regulation of DNA-templated transcription"/>
    <property type="evidence" value="ECO:0007669"/>
    <property type="project" value="TreeGrafter"/>
</dbReference>
<dbReference type="GO" id="GO:1900376">
    <property type="term" value="P:regulation of secondary metabolite biosynthetic process"/>
    <property type="evidence" value="ECO:0007669"/>
    <property type="project" value="TreeGrafter"/>
</dbReference>
<dbReference type="CDD" id="cd07153">
    <property type="entry name" value="Fur_like"/>
    <property type="match status" value="1"/>
</dbReference>
<dbReference type="FunFam" id="1.10.10.10:FF:000459">
    <property type="entry name" value="Ferric uptake regulation protein"/>
    <property type="match status" value="1"/>
</dbReference>
<dbReference type="FunFam" id="3.30.1490.190:FF:000006">
    <property type="entry name" value="Fur family transcriptional regulator"/>
    <property type="match status" value="1"/>
</dbReference>
<dbReference type="Gene3D" id="3.30.1490.190">
    <property type="match status" value="1"/>
</dbReference>
<dbReference type="Gene3D" id="1.10.10.10">
    <property type="entry name" value="Winged helix-like DNA-binding domain superfamily/Winged helix DNA-binding domain"/>
    <property type="match status" value="1"/>
</dbReference>
<dbReference type="InterPro" id="IPR002481">
    <property type="entry name" value="FUR"/>
</dbReference>
<dbReference type="InterPro" id="IPR043135">
    <property type="entry name" value="Fur_C"/>
</dbReference>
<dbReference type="InterPro" id="IPR036388">
    <property type="entry name" value="WH-like_DNA-bd_sf"/>
</dbReference>
<dbReference type="InterPro" id="IPR036390">
    <property type="entry name" value="WH_DNA-bd_sf"/>
</dbReference>
<dbReference type="PANTHER" id="PTHR33202:SF2">
    <property type="entry name" value="FERRIC UPTAKE REGULATION PROTEIN"/>
    <property type="match status" value="1"/>
</dbReference>
<dbReference type="PANTHER" id="PTHR33202">
    <property type="entry name" value="ZINC UPTAKE REGULATION PROTEIN"/>
    <property type="match status" value="1"/>
</dbReference>
<dbReference type="Pfam" id="PF01475">
    <property type="entry name" value="FUR"/>
    <property type="match status" value="1"/>
</dbReference>
<dbReference type="SUPFAM" id="SSF46785">
    <property type="entry name" value="Winged helix' DNA-binding domain"/>
    <property type="match status" value="1"/>
</dbReference>
<evidence type="ECO:0000250" key="1"/>
<evidence type="ECO:0000305" key="2"/>
<feature type="chain" id="PRO_0000427171" description="Zinc uptake regulation protein">
    <location>
        <begin position="1"/>
        <end position="130"/>
    </location>
</feature>
<feature type="binding site" evidence="1">
    <location>
        <position position="61"/>
    </location>
    <ligand>
        <name>Zn(2+)</name>
        <dbReference type="ChEBI" id="CHEBI:29105"/>
        <label>1</label>
        <note>catalytic</note>
    </ligand>
</feature>
<feature type="binding site" evidence="1">
    <location>
        <position position="75"/>
    </location>
    <ligand>
        <name>Zn(2+)</name>
        <dbReference type="ChEBI" id="CHEBI:29105"/>
        <label>1</label>
        <note>catalytic</note>
    </ligand>
</feature>
<feature type="binding site" evidence="1">
    <location>
        <position position="79"/>
    </location>
    <ligand>
        <name>Zn(2+)</name>
        <dbReference type="ChEBI" id="CHEBI:29105"/>
        <label>3</label>
    </ligand>
</feature>
<feature type="binding site" evidence="1">
    <location>
        <position position="80"/>
    </location>
    <ligand>
        <name>Zn(2+)</name>
        <dbReference type="ChEBI" id="CHEBI:29105"/>
        <label>1</label>
        <note>catalytic</note>
    </ligand>
</feature>
<feature type="binding site" evidence="1">
    <location>
        <position position="81"/>
    </location>
    <ligand>
        <name>Zn(2+)</name>
        <dbReference type="ChEBI" id="CHEBI:29105"/>
        <label>3</label>
    </ligand>
</feature>
<feature type="binding site" evidence="1">
    <location>
        <position position="82"/>
    </location>
    <ligand>
        <name>Zn(2+)</name>
        <dbReference type="ChEBI" id="CHEBI:29105"/>
        <label>1</label>
        <note>catalytic</note>
    </ligand>
</feature>
<feature type="binding site" evidence="1">
    <location>
        <position position="85"/>
    </location>
    <ligand>
        <name>Zn(2+)</name>
        <dbReference type="ChEBI" id="CHEBI:29105"/>
        <label>2</label>
        <note>structural</note>
    </ligand>
</feature>
<feature type="binding site" evidence="1">
    <location>
        <position position="88"/>
    </location>
    <ligand>
        <name>Zn(2+)</name>
        <dbReference type="ChEBI" id="CHEBI:29105"/>
        <label>2</label>
        <note>structural</note>
    </ligand>
</feature>
<feature type="binding site" evidence="1">
    <location>
        <position position="100"/>
    </location>
    <ligand>
        <name>Zn(2+)</name>
        <dbReference type="ChEBI" id="CHEBI:29105"/>
        <label>3</label>
    </ligand>
</feature>
<feature type="binding site" evidence="1">
    <location>
        <position position="117"/>
    </location>
    <ligand>
        <name>Zn(2+)</name>
        <dbReference type="ChEBI" id="CHEBI:29105"/>
        <label>3</label>
    </ligand>
</feature>
<feature type="binding site" evidence="1">
    <location>
        <position position="125"/>
    </location>
    <ligand>
        <name>Zn(2+)</name>
        <dbReference type="ChEBI" id="CHEBI:29105"/>
        <label>2</label>
        <note>structural</note>
    </ligand>
</feature>
<feature type="binding site" evidence="1">
    <location>
        <position position="128"/>
    </location>
    <ligand>
        <name>Zn(2+)</name>
        <dbReference type="ChEBI" id="CHEBI:29105"/>
        <label>2</label>
        <note>structural</note>
    </ligand>
</feature>
<organism>
    <name type="scientific">Mycobacterium tuberculosis (strain CDC 1551 / Oshkosh)</name>
    <dbReference type="NCBI Taxonomy" id="83331"/>
    <lineage>
        <taxon>Bacteria</taxon>
        <taxon>Bacillati</taxon>
        <taxon>Actinomycetota</taxon>
        <taxon>Actinomycetes</taxon>
        <taxon>Mycobacteriales</taxon>
        <taxon>Mycobacteriaceae</taxon>
        <taxon>Mycobacterium</taxon>
        <taxon>Mycobacterium tuberculosis complex</taxon>
    </lineage>
</organism>
<gene>
    <name type="primary">zur</name>
    <name type="synonym">fur-2</name>
    <name type="synonym">furB</name>
    <name type="ordered locus">MT2428</name>
</gene>
<accession>P9WN84</accession>
<accession>F2GIN3</accession>
<accession>L0TC35</accession>
<accession>O05839</accession>
<accession>Q7D799</accession>
<proteinExistence type="inferred from homology"/>
<keyword id="KW-0963">Cytoplasm</keyword>
<keyword id="KW-0238">DNA-binding</keyword>
<keyword id="KW-0479">Metal-binding</keyword>
<keyword id="KW-1185">Reference proteome</keyword>
<keyword id="KW-0678">Repressor</keyword>
<keyword id="KW-0804">Transcription</keyword>
<keyword id="KW-0805">Transcription regulation</keyword>
<keyword id="KW-0862">Zinc</keyword>